<gene>
    <name type="primary">hacA</name>
    <name type="ordered locus">MM_0409</name>
</gene>
<sequence length="391" mass="41938">MLADVDYAMAHDGTSILAVNAFKEMEMERVWDPSRIVIPFDHIAPANTETSATLQKEIREWVREQSIPNFYEIGEGICHQVLPENGFALPGKLLVGADSHSCTYGAFGAFATGVGATDMAEIFATGKLWFKVPESFRMTVEGSLDKHVYAKDLTLYLIGKTGIAGATYKAVEFYGQAISELSVAGRMTLCNMAIEMGAKTGIVPPDEKTFDFLKNRAVAPYEPVYSDPDASYLKEFVYDAGDIEPQVACPHQVDNVKPVGEVEGTHVDQVFIGTCTNGRLEDLEVAASVLKGKKVTVRTIIIPASRSTLLAAIKNGTMEILLKAGVTLATPGCGPCLGAHQGVLGEGEVCVSTANRNFKGRMGKDGFIYLASPATAAASALTGEITDPRKI</sequence>
<accession>Q8PZT3</accession>
<organism>
    <name type="scientific">Methanosarcina mazei (strain ATCC BAA-159 / DSM 3647 / Goe1 / Go1 / JCM 11833 / OCM 88)</name>
    <name type="common">Methanosarcina frisia</name>
    <dbReference type="NCBI Taxonomy" id="192952"/>
    <lineage>
        <taxon>Archaea</taxon>
        <taxon>Methanobacteriati</taxon>
        <taxon>Methanobacteriota</taxon>
        <taxon>Stenosarchaea group</taxon>
        <taxon>Methanomicrobia</taxon>
        <taxon>Methanosarcinales</taxon>
        <taxon>Methanosarcinaceae</taxon>
        <taxon>Methanosarcina</taxon>
    </lineage>
</organism>
<comment type="function">
    <text evidence="1">Component of a hydro-lyase with broad substrate specificity for cis-unsaturated tricarboxylic acids. Catalyzes both the reversible dehydration of (R)-homocitrate ((R)-2-hydroxybutane-1,2,4-tricarboxylate) to produce cis-homoaconitate ((Z)-but-1-ene-1,2,4-tricarboxylate), and its hydration to homoisocitrate ((1R,2S)-1-hydroxybutane-1,2,4-tricarboxylate). Is also able to hydrate the analogous longer chain substrates cis-homo(2)-aconitate, cis-homo(3)-aconitate. These reactions are part of the biosynthesis pathway of coenzyme B.</text>
</comment>
<comment type="catalytic activity">
    <reaction evidence="1">
        <text>(2R)-homocitrate = (2R,3S)-homoisocitrate</text>
        <dbReference type="Rhea" id="RHEA:32303"/>
        <dbReference type="ChEBI" id="CHEBI:15404"/>
        <dbReference type="ChEBI" id="CHEBI:58884"/>
        <dbReference type="EC" id="4.2.1.114"/>
    </reaction>
    <physiologicalReaction direction="left-to-right" evidence="1">
        <dbReference type="Rhea" id="RHEA:32304"/>
    </physiologicalReaction>
</comment>
<comment type="catalytic activity">
    <reaction evidence="1">
        <text>(2R)-homocitrate = cis-homoaconitate + H2O</text>
        <dbReference type="Rhea" id="RHEA:26101"/>
        <dbReference type="ChEBI" id="CHEBI:15377"/>
        <dbReference type="ChEBI" id="CHEBI:58174"/>
        <dbReference type="ChEBI" id="CHEBI:58884"/>
    </reaction>
    <physiologicalReaction direction="left-to-right" evidence="1">
        <dbReference type="Rhea" id="RHEA:26102"/>
    </physiologicalReaction>
</comment>
<comment type="catalytic activity">
    <reaction evidence="1">
        <text>(2R,3S)-homoisocitrate = cis-homoaconitate + H2O</text>
        <dbReference type="Rhea" id="RHEA:15485"/>
        <dbReference type="ChEBI" id="CHEBI:15377"/>
        <dbReference type="ChEBI" id="CHEBI:15404"/>
        <dbReference type="ChEBI" id="CHEBI:58174"/>
    </reaction>
    <physiologicalReaction direction="right-to-left" evidence="1">
        <dbReference type="Rhea" id="RHEA:15487"/>
    </physiologicalReaction>
</comment>
<comment type="catalytic activity">
    <reaction evidence="1">
        <text>cis-(homo)2aconitate + H2O = (2R,3S)-iso(homo)2citrate</text>
        <dbReference type="Rhea" id="RHEA:68416"/>
        <dbReference type="ChEBI" id="CHEBI:15377"/>
        <dbReference type="ChEBI" id="CHEBI:72710"/>
        <dbReference type="ChEBI" id="CHEBI:72722"/>
        <dbReference type="EC" id="4.2.1.114"/>
    </reaction>
    <physiologicalReaction direction="left-to-right" evidence="1">
        <dbReference type="Rhea" id="RHEA:68417"/>
    </physiologicalReaction>
</comment>
<comment type="catalytic activity">
    <reaction evidence="1">
        <text>cis-(homo)3aconitate + H2O = (2R,3S)-iso(homo)3citrate</text>
        <dbReference type="Rhea" id="RHEA:68420"/>
        <dbReference type="ChEBI" id="CHEBI:15377"/>
        <dbReference type="ChEBI" id="CHEBI:72712"/>
        <dbReference type="ChEBI" id="CHEBI:177881"/>
        <dbReference type="EC" id="4.2.1.114"/>
    </reaction>
    <physiologicalReaction direction="left-to-right" evidence="1">
        <dbReference type="Rhea" id="RHEA:68421"/>
    </physiologicalReaction>
</comment>
<comment type="pathway">
    <text evidence="1">Organic acid metabolism; 2-oxosuberate biosynthesis.</text>
</comment>
<comment type="subunit">
    <text evidence="1">Heterotetramer of 2 HacA and 2 HacB proteins.</text>
</comment>
<comment type="similarity">
    <text evidence="2">Belongs to the aconitase/IPM isomerase family. LeuC type 2 subfamily.</text>
</comment>
<evidence type="ECO:0000250" key="1">
    <source>
        <dbReference type="UniProtKB" id="Q58409"/>
    </source>
</evidence>
<evidence type="ECO:0000255" key="2">
    <source>
        <dbReference type="HAMAP-Rule" id="MF_01027"/>
    </source>
</evidence>
<reference key="1">
    <citation type="journal article" date="2002" name="J. Mol. Microbiol. Biotechnol.">
        <title>The genome of Methanosarcina mazei: evidence for lateral gene transfer between Bacteria and Archaea.</title>
        <authorList>
            <person name="Deppenmeier U."/>
            <person name="Johann A."/>
            <person name="Hartsch T."/>
            <person name="Merkl R."/>
            <person name="Schmitz R.A."/>
            <person name="Martinez-Arias R."/>
            <person name="Henne A."/>
            <person name="Wiezer A."/>
            <person name="Baeumer S."/>
            <person name="Jacobi C."/>
            <person name="Brueggemann H."/>
            <person name="Lienard T."/>
            <person name="Christmann A."/>
            <person name="Boemecke M."/>
            <person name="Steckel S."/>
            <person name="Bhattacharyya A."/>
            <person name="Lykidis A."/>
            <person name="Overbeek R."/>
            <person name="Klenk H.-P."/>
            <person name="Gunsalus R.P."/>
            <person name="Fritz H.-J."/>
            <person name="Gottschalk G."/>
        </authorList>
    </citation>
    <scope>NUCLEOTIDE SEQUENCE [LARGE SCALE GENOMIC DNA]</scope>
    <source>
        <strain>ATCC BAA-159 / DSM 3647 / Goe1 / Go1 / JCM 11833 / OCM 88</strain>
    </source>
</reference>
<protein>
    <recommendedName>
        <fullName>Probable methanogen homoaconitase large subunit</fullName>
        <shortName>HACN</shortName>
        <ecNumber evidence="1">4.2.1.114</ecNumber>
    </recommendedName>
    <alternativeName>
        <fullName>Homoaconitate hydratase</fullName>
    </alternativeName>
</protein>
<proteinExistence type="inferred from homology"/>
<feature type="chain" id="PRO_0000076872" description="Probable methanogen homoaconitase large subunit">
    <location>
        <begin position="1"/>
        <end position="391"/>
    </location>
</feature>
<feature type="binding site" evidence="2">
    <location>
        <position position="275"/>
    </location>
    <ligand>
        <name>[4Fe-4S] cluster</name>
        <dbReference type="ChEBI" id="CHEBI:49883"/>
    </ligand>
</feature>
<feature type="binding site" evidence="2">
    <location>
        <position position="333"/>
    </location>
    <ligand>
        <name>[4Fe-4S] cluster</name>
        <dbReference type="ChEBI" id="CHEBI:49883"/>
    </ligand>
</feature>
<feature type="binding site" evidence="2">
    <location>
        <position position="336"/>
    </location>
    <ligand>
        <name>[4Fe-4S] cluster</name>
        <dbReference type="ChEBI" id="CHEBI:49883"/>
    </ligand>
</feature>
<dbReference type="EC" id="4.2.1.114" evidence="1"/>
<dbReference type="EMBL" id="AE008384">
    <property type="protein sequence ID" value="AAM30105.1"/>
    <property type="molecule type" value="Genomic_DNA"/>
</dbReference>
<dbReference type="SMR" id="Q8PZT3"/>
<dbReference type="KEGG" id="mma:MM_0409"/>
<dbReference type="PATRIC" id="fig|192952.21.peg.491"/>
<dbReference type="eggNOG" id="arCOG01698">
    <property type="taxonomic scope" value="Archaea"/>
</dbReference>
<dbReference type="HOGENOM" id="CLU_006714_3_4_2"/>
<dbReference type="UniPathway" id="UPA00919"/>
<dbReference type="Proteomes" id="UP000000595">
    <property type="component" value="Chromosome"/>
</dbReference>
<dbReference type="GO" id="GO:0003861">
    <property type="term" value="F:3-isopropylmalate dehydratase activity"/>
    <property type="evidence" value="ECO:0007669"/>
    <property type="project" value="UniProtKB-UniRule"/>
</dbReference>
<dbReference type="GO" id="GO:0051539">
    <property type="term" value="F:4 iron, 4 sulfur cluster binding"/>
    <property type="evidence" value="ECO:0007669"/>
    <property type="project" value="UniProtKB-KW"/>
</dbReference>
<dbReference type="GO" id="GO:0004409">
    <property type="term" value="F:homoaconitate hydratase activity"/>
    <property type="evidence" value="ECO:0007669"/>
    <property type="project" value="RHEA"/>
</dbReference>
<dbReference type="GO" id="GO:0046872">
    <property type="term" value="F:metal ion binding"/>
    <property type="evidence" value="ECO:0007669"/>
    <property type="project" value="UniProtKB-KW"/>
</dbReference>
<dbReference type="GO" id="GO:0009098">
    <property type="term" value="P:L-leucine biosynthetic process"/>
    <property type="evidence" value="ECO:0007669"/>
    <property type="project" value="UniProtKB-UniRule"/>
</dbReference>
<dbReference type="CDD" id="cd01583">
    <property type="entry name" value="IPMI"/>
    <property type="match status" value="1"/>
</dbReference>
<dbReference type="Gene3D" id="3.30.499.10">
    <property type="entry name" value="Aconitase, domain 3"/>
    <property type="match status" value="2"/>
</dbReference>
<dbReference type="HAMAP" id="MF_01027">
    <property type="entry name" value="LeuC_type2"/>
    <property type="match status" value="1"/>
</dbReference>
<dbReference type="InterPro" id="IPR015931">
    <property type="entry name" value="Acnase/IPM_dHydase_lsu_aba_1/3"/>
</dbReference>
<dbReference type="InterPro" id="IPR001030">
    <property type="entry name" value="Acoase/IPM_deHydtase_lsu_aba"/>
</dbReference>
<dbReference type="InterPro" id="IPR018136">
    <property type="entry name" value="Aconitase_4Fe-4S_BS"/>
</dbReference>
<dbReference type="InterPro" id="IPR036008">
    <property type="entry name" value="Aconitase_4Fe-4S_dom"/>
</dbReference>
<dbReference type="InterPro" id="IPR011826">
    <property type="entry name" value="HAcnase/IPMdehydase_lsu_prok"/>
</dbReference>
<dbReference type="InterPro" id="IPR006251">
    <property type="entry name" value="Homoacnase/IPMdehydase_lsu"/>
</dbReference>
<dbReference type="InterPro" id="IPR050067">
    <property type="entry name" value="IPM_dehydratase_rel_enz"/>
</dbReference>
<dbReference type="InterPro" id="IPR033941">
    <property type="entry name" value="IPMI_cat"/>
</dbReference>
<dbReference type="NCBIfam" id="TIGR01343">
    <property type="entry name" value="hacA_fam"/>
    <property type="match status" value="1"/>
</dbReference>
<dbReference type="NCBIfam" id="TIGR02086">
    <property type="entry name" value="IPMI_arch"/>
    <property type="match status" value="1"/>
</dbReference>
<dbReference type="NCBIfam" id="NF001614">
    <property type="entry name" value="PRK00402.1"/>
    <property type="match status" value="1"/>
</dbReference>
<dbReference type="PANTHER" id="PTHR43822:SF2">
    <property type="entry name" value="HOMOACONITASE, MITOCHONDRIAL"/>
    <property type="match status" value="1"/>
</dbReference>
<dbReference type="PANTHER" id="PTHR43822">
    <property type="entry name" value="HOMOACONITASE, MITOCHONDRIAL-RELATED"/>
    <property type="match status" value="1"/>
</dbReference>
<dbReference type="Pfam" id="PF00330">
    <property type="entry name" value="Aconitase"/>
    <property type="match status" value="2"/>
</dbReference>
<dbReference type="PRINTS" id="PR00415">
    <property type="entry name" value="ACONITASE"/>
</dbReference>
<dbReference type="SUPFAM" id="SSF53732">
    <property type="entry name" value="Aconitase iron-sulfur domain"/>
    <property type="match status" value="1"/>
</dbReference>
<dbReference type="PROSITE" id="PS00450">
    <property type="entry name" value="ACONITASE_1"/>
    <property type="match status" value="1"/>
</dbReference>
<dbReference type="PROSITE" id="PS01244">
    <property type="entry name" value="ACONITASE_2"/>
    <property type="match status" value="1"/>
</dbReference>
<keyword id="KW-0004">4Fe-4S</keyword>
<keyword id="KW-0408">Iron</keyword>
<keyword id="KW-0411">Iron-sulfur</keyword>
<keyword id="KW-0456">Lyase</keyword>
<keyword id="KW-0479">Metal-binding</keyword>
<name>HACA_METMA</name>